<name>NUOA_PHOV8</name>
<keyword id="KW-0997">Cell inner membrane</keyword>
<keyword id="KW-1003">Cell membrane</keyword>
<keyword id="KW-0472">Membrane</keyword>
<keyword id="KW-0520">NAD</keyword>
<keyword id="KW-0874">Quinone</keyword>
<keyword id="KW-1278">Translocase</keyword>
<keyword id="KW-0812">Transmembrane</keyword>
<keyword id="KW-1133">Transmembrane helix</keyword>
<keyword id="KW-0813">Transport</keyword>
<evidence type="ECO:0000255" key="1">
    <source>
        <dbReference type="HAMAP-Rule" id="MF_01394"/>
    </source>
</evidence>
<sequence>MYFTLLVVVILTAIALVAVALGIARAISPRSYNSQKGEAYECGIPTRGRSWMQFKVGYYLFAILFLMFDVETVFLFPWAVVVQDLGVYGLFSILFFLVILVLGLAYAWKKGALEWK</sequence>
<comment type="function">
    <text evidence="1">NDH-1 shuttles electrons from NADH, via FMN and iron-sulfur (Fe-S) centers, to quinones in the respiratory chain. The immediate electron acceptor for the enzyme in this species is believed to be a menaquinone. Couples the redox reaction to proton translocation (for every two electrons transferred, four hydrogen ions are translocated across the cytoplasmic membrane), and thus conserves the redox energy in a proton gradient.</text>
</comment>
<comment type="catalytic activity">
    <reaction evidence="1">
        <text>a quinone + NADH + 5 H(+)(in) = a quinol + NAD(+) + 4 H(+)(out)</text>
        <dbReference type="Rhea" id="RHEA:57888"/>
        <dbReference type="ChEBI" id="CHEBI:15378"/>
        <dbReference type="ChEBI" id="CHEBI:24646"/>
        <dbReference type="ChEBI" id="CHEBI:57540"/>
        <dbReference type="ChEBI" id="CHEBI:57945"/>
        <dbReference type="ChEBI" id="CHEBI:132124"/>
    </reaction>
</comment>
<comment type="subunit">
    <text evidence="1">NDH-1 is composed of 14 different subunits. Subunits NuoA, H, J, K, L, M, N constitute the membrane sector of the complex.</text>
</comment>
<comment type="subcellular location">
    <subcellularLocation>
        <location evidence="1">Cell inner membrane</location>
        <topology evidence="1">Multi-pass membrane protein</topology>
    </subcellularLocation>
</comment>
<comment type="similarity">
    <text evidence="1">Belongs to the complex I subunit 3 family.</text>
</comment>
<gene>
    <name evidence="1" type="primary">nuoA</name>
    <name type="ordered locus">BVU_1759</name>
</gene>
<feature type="chain" id="PRO_0000362629" description="NADH-quinone oxidoreductase subunit A">
    <location>
        <begin position="1"/>
        <end position="116"/>
    </location>
</feature>
<feature type="transmembrane region" description="Helical" evidence="1">
    <location>
        <begin position="3"/>
        <end position="23"/>
    </location>
</feature>
<feature type="transmembrane region" description="Helical" evidence="1">
    <location>
        <begin position="61"/>
        <end position="81"/>
    </location>
</feature>
<feature type="transmembrane region" description="Helical" evidence="1">
    <location>
        <begin position="85"/>
        <end position="105"/>
    </location>
</feature>
<protein>
    <recommendedName>
        <fullName evidence="1">NADH-quinone oxidoreductase subunit A</fullName>
        <ecNumber evidence="1">7.1.1.-</ecNumber>
    </recommendedName>
    <alternativeName>
        <fullName evidence="1">NADH dehydrogenase I subunit A</fullName>
    </alternativeName>
    <alternativeName>
        <fullName evidence="1">NDH-1 subunit A</fullName>
    </alternativeName>
    <alternativeName>
        <fullName evidence="1">NUO1</fullName>
    </alternativeName>
</protein>
<dbReference type="EC" id="7.1.1.-" evidence="1"/>
<dbReference type="EMBL" id="CP000139">
    <property type="protein sequence ID" value="ABR39435.1"/>
    <property type="molecule type" value="Genomic_DNA"/>
</dbReference>
<dbReference type="RefSeq" id="WP_005842860.1">
    <property type="nucleotide sequence ID" value="NZ_JANSWM010000100.1"/>
</dbReference>
<dbReference type="SMR" id="A6L171"/>
<dbReference type="STRING" id="435590.BVU_1759"/>
<dbReference type="PaxDb" id="435590-BVU_1759"/>
<dbReference type="KEGG" id="bvu:BVU_1759"/>
<dbReference type="eggNOG" id="COG0838">
    <property type="taxonomic scope" value="Bacteria"/>
</dbReference>
<dbReference type="HOGENOM" id="CLU_119549_1_2_10"/>
<dbReference type="BioCyc" id="BVUL435590:G1G59-1847-MONOMER"/>
<dbReference type="Proteomes" id="UP000002861">
    <property type="component" value="Chromosome"/>
</dbReference>
<dbReference type="GO" id="GO:0030964">
    <property type="term" value="C:NADH dehydrogenase complex"/>
    <property type="evidence" value="ECO:0007669"/>
    <property type="project" value="TreeGrafter"/>
</dbReference>
<dbReference type="GO" id="GO:0005886">
    <property type="term" value="C:plasma membrane"/>
    <property type="evidence" value="ECO:0007669"/>
    <property type="project" value="UniProtKB-SubCell"/>
</dbReference>
<dbReference type="GO" id="GO:0008137">
    <property type="term" value="F:NADH dehydrogenase (ubiquinone) activity"/>
    <property type="evidence" value="ECO:0007669"/>
    <property type="project" value="InterPro"/>
</dbReference>
<dbReference type="GO" id="GO:0050136">
    <property type="term" value="F:NADH:ubiquinone reductase (non-electrogenic) activity"/>
    <property type="evidence" value="ECO:0007669"/>
    <property type="project" value="UniProtKB-UniRule"/>
</dbReference>
<dbReference type="GO" id="GO:0048038">
    <property type="term" value="F:quinone binding"/>
    <property type="evidence" value="ECO:0007669"/>
    <property type="project" value="UniProtKB-KW"/>
</dbReference>
<dbReference type="FunFam" id="1.20.58.1610:FF:000008">
    <property type="entry name" value="NADH-quinone oxidoreductase subunit A"/>
    <property type="match status" value="1"/>
</dbReference>
<dbReference type="Gene3D" id="1.20.58.1610">
    <property type="entry name" value="NADH:ubiquinone/plastoquinone oxidoreductase, chain 3"/>
    <property type="match status" value="1"/>
</dbReference>
<dbReference type="HAMAP" id="MF_01394">
    <property type="entry name" value="NDH1_NuoA"/>
    <property type="match status" value="1"/>
</dbReference>
<dbReference type="InterPro" id="IPR023043">
    <property type="entry name" value="NAD(P)H_OxRDtase_bac/plastid"/>
</dbReference>
<dbReference type="InterPro" id="IPR000440">
    <property type="entry name" value="NADH_UbQ/plastoQ_OxRdtase_su3"/>
</dbReference>
<dbReference type="InterPro" id="IPR038430">
    <property type="entry name" value="NDAH_ubi_oxred_su3_sf"/>
</dbReference>
<dbReference type="PANTHER" id="PTHR11058:SF22">
    <property type="entry name" value="NADH-QUINONE OXIDOREDUCTASE SUBUNIT A"/>
    <property type="match status" value="1"/>
</dbReference>
<dbReference type="PANTHER" id="PTHR11058">
    <property type="entry name" value="NADH-UBIQUINONE OXIDOREDUCTASE CHAIN 3"/>
    <property type="match status" value="1"/>
</dbReference>
<dbReference type="Pfam" id="PF00507">
    <property type="entry name" value="Oxidored_q4"/>
    <property type="match status" value="1"/>
</dbReference>
<organism>
    <name type="scientific">Phocaeicola vulgatus (strain ATCC 8482 / DSM 1447 / JCM 5826 / CCUG 4940 / NBRC 14291 / NCTC 11154)</name>
    <name type="common">Bacteroides vulgatus</name>
    <dbReference type="NCBI Taxonomy" id="435590"/>
    <lineage>
        <taxon>Bacteria</taxon>
        <taxon>Pseudomonadati</taxon>
        <taxon>Bacteroidota</taxon>
        <taxon>Bacteroidia</taxon>
        <taxon>Bacteroidales</taxon>
        <taxon>Bacteroidaceae</taxon>
        <taxon>Phocaeicola</taxon>
    </lineage>
</organism>
<proteinExistence type="inferred from homology"/>
<reference key="1">
    <citation type="journal article" date="2007" name="PLoS Biol.">
        <title>Evolution of symbiotic bacteria in the distal human intestine.</title>
        <authorList>
            <person name="Xu J."/>
            <person name="Mahowald M.A."/>
            <person name="Ley R.E."/>
            <person name="Lozupone C.A."/>
            <person name="Hamady M."/>
            <person name="Martens E.C."/>
            <person name="Henrissat B."/>
            <person name="Coutinho P.M."/>
            <person name="Minx P."/>
            <person name="Latreille P."/>
            <person name="Cordum H."/>
            <person name="Van Brunt A."/>
            <person name="Kim K."/>
            <person name="Fulton R.S."/>
            <person name="Fulton L.A."/>
            <person name="Clifton S.W."/>
            <person name="Wilson R.K."/>
            <person name="Knight R.D."/>
            <person name="Gordon J.I."/>
        </authorList>
    </citation>
    <scope>NUCLEOTIDE SEQUENCE [LARGE SCALE GENOMIC DNA]</scope>
    <source>
        <strain>ATCC 8482 / DSM 1447 / JCM 5826 / CCUG 4940 / NBRC 14291 / NCTC 11154</strain>
    </source>
</reference>
<accession>A6L171</accession>